<sequence>MDLFDRINKLKEEGLDQIKQAENQKMLDKIRVELMGRKGELTQILHSMKDIAPENRPKVGQEVNQVRDILQKQLDEAKDHFLQAIIAQKLEEEKIDVTLPGREGHLGSKHPINIILDDLESYFIGMGYKVVQGPEIETDHYCFEMMNLPKDHPARDMQATFYIDNEDLLRTQTSGDQARVLEKHDFSKGPLKMVGPGKVYRRDDDDATHSHQFQQMEGLVVDKNVTMSDLKGTLEMIAKHVFGQDRKTRLRPSYFPFTEPSVEMDVSCFNCDGKGCPICKYTGWIEVLGAGMVHPNVLENAGVDSTVYGGFAFGLGLDRFAILKYGISDIRDFYTNDVRFLAQFRKEED</sequence>
<comment type="catalytic activity">
    <reaction evidence="1">
        <text>tRNA(Phe) + L-phenylalanine + ATP = L-phenylalanyl-tRNA(Phe) + AMP + diphosphate + H(+)</text>
        <dbReference type="Rhea" id="RHEA:19413"/>
        <dbReference type="Rhea" id="RHEA-COMP:9668"/>
        <dbReference type="Rhea" id="RHEA-COMP:9699"/>
        <dbReference type="ChEBI" id="CHEBI:15378"/>
        <dbReference type="ChEBI" id="CHEBI:30616"/>
        <dbReference type="ChEBI" id="CHEBI:33019"/>
        <dbReference type="ChEBI" id="CHEBI:58095"/>
        <dbReference type="ChEBI" id="CHEBI:78442"/>
        <dbReference type="ChEBI" id="CHEBI:78531"/>
        <dbReference type="ChEBI" id="CHEBI:456215"/>
        <dbReference type="EC" id="6.1.1.20"/>
    </reaction>
</comment>
<comment type="cofactor">
    <cofactor evidence="1">
        <name>Mg(2+)</name>
        <dbReference type="ChEBI" id="CHEBI:18420"/>
    </cofactor>
    <text evidence="1">Binds 2 magnesium ions per tetramer.</text>
</comment>
<comment type="subunit">
    <text evidence="1">Tetramer of two alpha and two beta subunits.</text>
</comment>
<comment type="subcellular location">
    <subcellularLocation>
        <location evidence="1">Cytoplasm</location>
    </subcellularLocation>
</comment>
<comment type="similarity">
    <text evidence="1">Belongs to the class-II aminoacyl-tRNA synthetase family. Phe-tRNA synthetase alpha subunit type 1 subfamily.</text>
</comment>
<keyword id="KW-0030">Aminoacyl-tRNA synthetase</keyword>
<keyword id="KW-0067">ATP-binding</keyword>
<keyword id="KW-0963">Cytoplasm</keyword>
<keyword id="KW-0436">Ligase</keyword>
<keyword id="KW-0460">Magnesium</keyword>
<keyword id="KW-0479">Metal-binding</keyword>
<keyword id="KW-0547">Nucleotide-binding</keyword>
<keyword id="KW-0648">Protein biosynthesis</keyword>
<protein>
    <recommendedName>
        <fullName evidence="1">Phenylalanine--tRNA ligase alpha subunit</fullName>
        <ecNumber evidence="1">6.1.1.20</ecNumber>
    </recommendedName>
    <alternativeName>
        <fullName evidence="1">Phenylalanyl-tRNA synthetase alpha subunit</fullName>
        <shortName evidence="1">PheRS</shortName>
    </alternativeName>
</protein>
<name>SYFA_LACGA</name>
<feature type="chain" id="PRO_1000006849" description="Phenylalanine--tRNA ligase alpha subunit">
    <location>
        <begin position="1"/>
        <end position="349"/>
    </location>
</feature>
<feature type="binding site" evidence="1">
    <location>
        <position position="259"/>
    </location>
    <ligand>
        <name>Mg(2+)</name>
        <dbReference type="ChEBI" id="CHEBI:18420"/>
        <note>shared with beta subunit</note>
    </ligand>
</feature>
<accession>Q041W8</accession>
<gene>
    <name evidence="1" type="primary">pheS</name>
    <name type="ordered locus">LGAS_1392</name>
</gene>
<dbReference type="EC" id="6.1.1.20" evidence="1"/>
<dbReference type="EMBL" id="CP000413">
    <property type="protein sequence ID" value="ABJ60754.1"/>
    <property type="molecule type" value="Genomic_DNA"/>
</dbReference>
<dbReference type="RefSeq" id="WP_003646932.1">
    <property type="nucleotide sequence ID" value="NZ_WBMG01000003.1"/>
</dbReference>
<dbReference type="SMR" id="Q041W8"/>
<dbReference type="GeneID" id="29639381"/>
<dbReference type="KEGG" id="lga:LGAS_1392"/>
<dbReference type="HOGENOM" id="CLU_025086_0_1_9"/>
<dbReference type="BioCyc" id="LGAS324831:G1G6Y-1386-MONOMER"/>
<dbReference type="Proteomes" id="UP000000664">
    <property type="component" value="Chromosome"/>
</dbReference>
<dbReference type="GO" id="GO:0005737">
    <property type="term" value="C:cytoplasm"/>
    <property type="evidence" value="ECO:0007669"/>
    <property type="project" value="UniProtKB-SubCell"/>
</dbReference>
<dbReference type="GO" id="GO:0005524">
    <property type="term" value="F:ATP binding"/>
    <property type="evidence" value="ECO:0007669"/>
    <property type="project" value="UniProtKB-UniRule"/>
</dbReference>
<dbReference type="GO" id="GO:0140096">
    <property type="term" value="F:catalytic activity, acting on a protein"/>
    <property type="evidence" value="ECO:0007669"/>
    <property type="project" value="UniProtKB-ARBA"/>
</dbReference>
<dbReference type="GO" id="GO:0000287">
    <property type="term" value="F:magnesium ion binding"/>
    <property type="evidence" value="ECO:0007669"/>
    <property type="project" value="UniProtKB-UniRule"/>
</dbReference>
<dbReference type="GO" id="GO:0004826">
    <property type="term" value="F:phenylalanine-tRNA ligase activity"/>
    <property type="evidence" value="ECO:0007669"/>
    <property type="project" value="UniProtKB-UniRule"/>
</dbReference>
<dbReference type="GO" id="GO:0016740">
    <property type="term" value="F:transferase activity"/>
    <property type="evidence" value="ECO:0007669"/>
    <property type="project" value="UniProtKB-ARBA"/>
</dbReference>
<dbReference type="GO" id="GO:0000049">
    <property type="term" value="F:tRNA binding"/>
    <property type="evidence" value="ECO:0007669"/>
    <property type="project" value="InterPro"/>
</dbReference>
<dbReference type="GO" id="GO:0006432">
    <property type="term" value="P:phenylalanyl-tRNA aminoacylation"/>
    <property type="evidence" value="ECO:0007669"/>
    <property type="project" value="UniProtKB-UniRule"/>
</dbReference>
<dbReference type="CDD" id="cd00496">
    <property type="entry name" value="PheRS_alpha_core"/>
    <property type="match status" value="1"/>
</dbReference>
<dbReference type="FunFam" id="3.30.930.10:FF:000003">
    <property type="entry name" value="Phenylalanine--tRNA ligase alpha subunit"/>
    <property type="match status" value="1"/>
</dbReference>
<dbReference type="Gene3D" id="3.30.930.10">
    <property type="entry name" value="Bira Bifunctional Protein, Domain 2"/>
    <property type="match status" value="1"/>
</dbReference>
<dbReference type="HAMAP" id="MF_00281">
    <property type="entry name" value="Phe_tRNA_synth_alpha1"/>
    <property type="match status" value="1"/>
</dbReference>
<dbReference type="InterPro" id="IPR006195">
    <property type="entry name" value="aa-tRNA-synth_II"/>
</dbReference>
<dbReference type="InterPro" id="IPR045864">
    <property type="entry name" value="aa-tRNA-synth_II/BPL/LPL"/>
</dbReference>
<dbReference type="InterPro" id="IPR004529">
    <property type="entry name" value="Phe-tRNA-synth_IIc_asu"/>
</dbReference>
<dbReference type="InterPro" id="IPR004188">
    <property type="entry name" value="Phe-tRNA_ligase_II_N"/>
</dbReference>
<dbReference type="InterPro" id="IPR022911">
    <property type="entry name" value="Phe_tRNA_ligase_alpha1_bac"/>
</dbReference>
<dbReference type="InterPro" id="IPR002319">
    <property type="entry name" value="Phenylalanyl-tRNA_Synthase"/>
</dbReference>
<dbReference type="InterPro" id="IPR010978">
    <property type="entry name" value="tRNA-bd_arm"/>
</dbReference>
<dbReference type="NCBIfam" id="TIGR00468">
    <property type="entry name" value="pheS"/>
    <property type="match status" value="1"/>
</dbReference>
<dbReference type="PANTHER" id="PTHR11538:SF41">
    <property type="entry name" value="PHENYLALANINE--TRNA LIGASE, MITOCHONDRIAL"/>
    <property type="match status" value="1"/>
</dbReference>
<dbReference type="PANTHER" id="PTHR11538">
    <property type="entry name" value="PHENYLALANYL-TRNA SYNTHETASE"/>
    <property type="match status" value="1"/>
</dbReference>
<dbReference type="Pfam" id="PF02912">
    <property type="entry name" value="Phe_tRNA-synt_N"/>
    <property type="match status" value="1"/>
</dbReference>
<dbReference type="Pfam" id="PF01409">
    <property type="entry name" value="tRNA-synt_2d"/>
    <property type="match status" value="1"/>
</dbReference>
<dbReference type="SUPFAM" id="SSF55681">
    <property type="entry name" value="Class II aaRS and biotin synthetases"/>
    <property type="match status" value="1"/>
</dbReference>
<dbReference type="SUPFAM" id="SSF46589">
    <property type="entry name" value="tRNA-binding arm"/>
    <property type="match status" value="1"/>
</dbReference>
<dbReference type="PROSITE" id="PS50862">
    <property type="entry name" value="AA_TRNA_LIGASE_II"/>
    <property type="match status" value="1"/>
</dbReference>
<evidence type="ECO:0000255" key="1">
    <source>
        <dbReference type="HAMAP-Rule" id="MF_00281"/>
    </source>
</evidence>
<reference key="1">
    <citation type="journal article" date="2006" name="Proc. Natl. Acad. Sci. U.S.A.">
        <title>Comparative genomics of the lactic acid bacteria.</title>
        <authorList>
            <person name="Makarova K.S."/>
            <person name="Slesarev A."/>
            <person name="Wolf Y.I."/>
            <person name="Sorokin A."/>
            <person name="Mirkin B."/>
            <person name="Koonin E.V."/>
            <person name="Pavlov A."/>
            <person name="Pavlova N."/>
            <person name="Karamychev V."/>
            <person name="Polouchine N."/>
            <person name="Shakhova V."/>
            <person name="Grigoriev I."/>
            <person name="Lou Y."/>
            <person name="Rohksar D."/>
            <person name="Lucas S."/>
            <person name="Huang K."/>
            <person name="Goodstein D.M."/>
            <person name="Hawkins T."/>
            <person name="Plengvidhya V."/>
            <person name="Welker D."/>
            <person name="Hughes J."/>
            <person name="Goh Y."/>
            <person name="Benson A."/>
            <person name="Baldwin K."/>
            <person name="Lee J.-H."/>
            <person name="Diaz-Muniz I."/>
            <person name="Dosti B."/>
            <person name="Smeianov V."/>
            <person name="Wechter W."/>
            <person name="Barabote R."/>
            <person name="Lorca G."/>
            <person name="Altermann E."/>
            <person name="Barrangou R."/>
            <person name="Ganesan B."/>
            <person name="Xie Y."/>
            <person name="Rawsthorne H."/>
            <person name="Tamir D."/>
            <person name="Parker C."/>
            <person name="Breidt F."/>
            <person name="Broadbent J.R."/>
            <person name="Hutkins R."/>
            <person name="O'Sullivan D."/>
            <person name="Steele J."/>
            <person name="Unlu G."/>
            <person name="Saier M.H. Jr."/>
            <person name="Klaenhammer T."/>
            <person name="Richardson P."/>
            <person name="Kozyavkin S."/>
            <person name="Weimer B.C."/>
            <person name="Mills D.A."/>
        </authorList>
    </citation>
    <scope>NUCLEOTIDE SEQUENCE [LARGE SCALE GENOMIC DNA]</scope>
    <source>
        <strain>ATCC 33323 / DSM 20243 / BCRC 14619 / CIP 102991 / JCM 1131 / KCTC 3163 / NCIMB 11718 / NCTC 13722 / AM63</strain>
    </source>
</reference>
<organism>
    <name type="scientific">Lactobacillus gasseri (strain ATCC 33323 / DSM 20243 / BCRC 14619 / CIP 102991 / JCM 1131 / KCTC 3163 / NCIMB 11718 / NCTC 13722 / AM63)</name>
    <dbReference type="NCBI Taxonomy" id="324831"/>
    <lineage>
        <taxon>Bacteria</taxon>
        <taxon>Bacillati</taxon>
        <taxon>Bacillota</taxon>
        <taxon>Bacilli</taxon>
        <taxon>Lactobacillales</taxon>
        <taxon>Lactobacillaceae</taxon>
        <taxon>Lactobacillus</taxon>
    </lineage>
</organism>
<proteinExistence type="inferred from homology"/>